<name>PSF3_YEAST</name>
<evidence type="ECO:0000250" key="1">
    <source>
        <dbReference type="UniProtKB" id="P40359"/>
    </source>
</evidence>
<evidence type="ECO:0000269" key="2">
    <source>
    </source>
</evidence>
<evidence type="ECO:0000269" key="3">
    <source>
    </source>
</evidence>
<evidence type="ECO:0000305" key="4"/>
<evidence type="ECO:0000312" key="5">
    <source>
        <dbReference type="EMBL" id="CAA88281.1"/>
    </source>
</evidence>
<evidence type="ECO:0000312" key="6">
    <source>
        <dbReference type="EMBL" id="CAA99167.1"/>
    </source>
</evidence>
<evidence type="ECO:0000312" key="7">
    <source>
        <dbReference type="SGD" id="S000005506"/>
    </source>
</evidence>
<evidence type="ECO:0007829" key="8">
    <source>
        <dbReference type="PDB" id="7PMK"/>
    </source>
</evidence>
<sequence>MGYYDIDDVLADGTEFPCKFQYDIPGLGYLENNPGRPITKNTKLSLPLWLARILAIVGGDEALVDEEPVPFVELLPPDMFSTKVMNAIKTDPVALDLHSINSHFFSLAIKWIMLFSEKELANVVSELLLQRAQELNHHASSLSIDLNADSTGKNSANTNIATSTFLLKLEEMEKEIYKKSHESYKDTKRWMFKK</sequence>
<proteinExistence type="evidence at protein level"/>
<protein>
    <recommendedName>
        <fullName>DNA replication complex GINS protein PSF3</fullName>
    </recommendedName>
    <alternativeName>
        <fullName>Partner of Sld five 3</fullName>
    </alternativeName>
</protein>
<dbReference type="EMBL" id="Z48239">
    <property type="protein sequence ID" value="CAA88281.1"/>
    <property type="status" value="ALT_INIT"/>
    <property type="molecule type" value="Genomic_DNA"/>
</dbReference>
<dbReference type="EMBL" id="Z74888">
    <property type="protein sequence ID" value="CAA99167.1"/>
    <property type="status" value="ALT_INIT"/>
    <property type="molecule type" value="Genomic_DNA"/>
</dbReference>
<dbReference type="EMBL" id="AY693220">
    <property type="protein sequence ID" value="AAT93239.1"/>
    <property type="status" value="ALT_INIT"/>
    <property type="molecule type" value="Genomic_DNA"/>
</dbReference>
<dbReference type="EMBL" id="BK006948">
    <property type="protein sequence ID" value="DAA10639.1"/>
    <property type="molecule type" value="Genomic_DNA"/>
</dbReference>
<dbReference type="PIR" id="S60390">
    <property type="entry name" value="S60390"/>
</dbReference>
<dbReference type="RefSeq" id="NP_014495.2">
    <property type="nucleotide sequence ID" value="NM_001183400.1"/>
</dbReference>
<dbReference type="PDB" id="3JC5">
    <property type="method" value="EM"/>
    <property type="resolution" value="4.70 A"/>
    <property type="chains" value="C=1-194"/>
</dbReference>
<dbReference type="PDB" id="3JC6">
    <property type="method" value="EM"/>
    <property type="resolution" value="3.70 A"/>
    <property type="chains" value="C=1-194"/>
</dbReference>
<dbReference type="PDB" id="3JC7">
    <property type="method" value="EM"/>
    <property type="resolution" value="4.80 A"/>
    <property type="chains" value="C=1-194"/>
</dbReference>
<dbReference type="PDB" id="5U8S">
    <property type="method" value="EM"/>
    <property type="resolution" value="6.10 A"/>
    <property type="chains" value="C=1-194"/>
</dbReference>
<dbReference type="PDB" id="5U8T">
    <property type="method" value="EM"/>
    <property type="resolution" value="4.90 A"/>
    <property type="chains" value="C=1-194"/>
</dbReference>
<dbReference type="PDB" id="6HV9">
    <property type="method" value="EM"/>
    <property type="resolution" value="4.98 A"/>
    <property type="chains" value="E=1-194"/>
</dbReference>
<dbReference type="PDB" id="6PTJ">
    <property type="method" value="EM"/>
    <property type="resolution" value="3.80 A"/>
    <property type="chains" value="C=1-194"/>
</dbReference>
<dbReference type="PDB" id="6PTN">
    <property type="method" value="EM"/>
    <property type="resolution" value="5.80 A"/>
    <property type="chains" value="C/c=1-194"/>
</dbReference>
<dbReference type="PDB" id="6PTO">
    <property type="method" value="EM"/>
    <property type="resolution" value="7.00 A"/>
    <property type="chains" value="C/c/p=1-194"/>
</dbReference>
<dbReference type="PDB" id="6SKL">
    <property type="method" value="EM"/>
    <property type="resolution" value="3.70 A"/>
    <property type="chains" value="C=1-194"/>
</dbReference>
<dbReference type="PDB" id="6U0M">
    <property type="method" value="EM"/>
    <property type="resolution" value="3.90 A"/>
    <property type="chains" value="C=3-193"/>
</dbReference>
<dbReference type="PDB" id="7PMK">
    <property type="method" value="EM"/>
    <property type="resolution" value="3.20 A"/>
    <property type="chains" value="C=1-194"/>
</dbReference>
<dbReference type="PDB" id="7QHS">
    <property type="method" value="EM"/>
    <property type="resolution" value="3.30 A"/>
    <property type="chains" value="C=1-194"/>
</dbReference>
<dbReference type="PDB" id="7Z13">
    <property type="method" value="EM"/>
    <property type="resolution" value="3.40 A"/>
    <property type="chains" value="C/J=1-194"/>
</dbReference>
<dbReference type="PDB" id="8B9A">
    <property type="method" value="EM"/>
    <property type="resolution" value="3.50 A"/>
    <property type="chains" value="E=1-194"/>
</dbReference>
<dbReference type="PDB" id="8B9B">
    <property type="method" value="EM"/>
    <property type="resolution" value="3.50 A"/>
    <property type="chains" value="E=1-194"/>
</dbReference>
<dbReference type="PDB" id="8B9C">
    <property type="method" value="EM"/>
    <property type="resolution" value="4.60 A"/>
    <property type="chains" value="E=1-194"/>
</dbReference>
<dbReference type="PDB" id="8KG6">
    <property type="method" value="EM"/>
    <property type="resolution" value="3.07 A"/>
    <property type="chains" value="C=1-194"/>
</dbReference>
<dbReference type="PDB" id="8KG8">
    <property type="method" value="EM"/>
    <property type="resolution" value="4.23 A"/>
    <property type="chains" value="C=1-194"/>
</dbReference>
<dbReference type="PDB" id="8KG9">
    <property type="method" value="EM"/>
    <property type="resolution" value="4.52 A"/>
    <property type="chains" value="C=1-194"/>
</dbReference>
<dbReference type="PDB" id="8P5E">
    <property type="method" value="EM"/>
    <property type="resolution" value="3.90 A"/>
    <property type="chains" value="C=1-194"/>
</dbReference>
<dbReference type="PDB" id="8P62">
    <property type="method" value="EM"/>
    <property type="resolution" value="3.90 A"/>
    <property type="chains" value="C=1-194"/>
</dbReference>
<dbReference type="PDB" id="8P63">
    <property type="method" value="EM"/>
    <property type="resolution" value="3.70 A"/>
    <property type="chains" value="C=1-194"/>
</dbReference>
<dbReference type="PDB" id="8W7M">
    <property type="method" value="EM"/>
    <property type="resolution" value="4.12 A"/>
    <property type="chains" value="C=1-194"/>
</dbReference>
<dbReference type="PDB" id="8W7S">
    <property type="method" value="EM"/>
    <property type="resolution" value="7.39 A"/>
    <property type="chains" value="C=1-194"/>
</dbReference>
<dbReference type="PDB" id="8XGC">
    <property type="method" value="EM"/>
    <property type="resolution" value="3.70 A"/>
    <property type="chains" value="C=1-194"/>
</dbReference>
<dbReference type="PDBsum" id="3JC5"/>
<dbReference type="PDBsum" id="3JC6"/>
<dbReference type="PDBsum" id="3JC7"/>
<dbReference type="PDBsum" id="5U8S"/>
<dbReference type="PDBsum" id="5U8T"/>
<dbReference type="PDBsum" id="6HV9"/>
<dbReference type="PDBsum" id="6PTJ"/>
<dbReference type="PDBsum" id="6PTN"/>
<dbReference type="PDBsum" id="6PTO"/>
<dbReference type="PDBsum" id="6SKL"/>
<dbReference type="PDBsum" id="6U0M"/>
<dbReference type="PDBsum" id="7PMK"/>
<dbReference type="PDBsum" id="7QHS"/>
<dbReference type="PDBsum" id="7Z13"/>
<dbReference type="PDBsum" id="8B9A"/>
<dbReference type="PDBsum" id="8B9B"/>
<dbReference type="PDBsum" id="8B9C"/>
<dbReference type="PDBsum" id="8KG6"/>
<dbReference type="PDBsum" id="8KG8"/>
<dbReference type="PDBsum" id="8KG9"/>
<dbReference type="PDBsum" id="8P5E"/>
<dbReference type="PDBsum" id="8P62"/>
<dbReference type="PDBsum" id="8P63"/>
<dbReference type="PDBsum" id="8W7M"/>
<dbReference type="PDBsum" id="8W7S"/>
<dbReference type="PDBsum" id="8XGC"/>
<dbReference type="EMDB" id="EMD-0288"/>
<dbReference type="EMDB" id="EMD-10227"/>
<dbReference type="EMDB" id="EMD-13978"/>
<dbReference type="EMDB" id="EMD-14439"/>
<dbReference type="EMDB" id="EMD-15924"/>
<dbReference type="EMDB" id="EMD-17449"/>
<dbReference type="EMDB" id="EMD-17458"/>
<dbReference type="EMDB" id="EMD-17459"/>
<dbReference type="EMDB" id="EMD-20471"/>
<dbReference type="EMDB" id="EMD-20472"/>
<dbReference type="EMDB" id="EMD-20473"/>
<dbReference type="EMDB" id="EMD-20607"/>
<dbReference type="EMDB" id="EMD-37211"/>
<dbReference type="EMDB" id="EMD-37213"/>
<dbReference type="EMDB" id="EMD-37215"/>
<dbReference type="EMDB" id="EMD-37343"/>
<dbReference type="EMDB" id="EMD-37345"/>
<dbReference type="EMDB" id="EMD-38317"/>
<dbReference type="EMDB" id="EMD-8518"/>
<dbReference type="EMDB" id="EMD-8519"/>
<dbReference type="SMR" id="Q12146"/>
<dbReference type="BioGRID" id="34271">
    <property type="interactions" value="59"/>
</dbReference>
<dbReference type="ComplexPortal" id="CPX-1641">
    <property type="entry name" value="GINS complex"/>
</dbReference>
<dbReference type="DIP" id="DIP-4461N"/>
<dbReference type="FunCoup" id="Q12146">
    <property type="interactions" value="495"/>
</dbReference>
<dbReference type="IntAct" id="Q12146">
    <property type="interactions" value="29"/>
</dbReference>
<dbReference type="MINT" id="Q12146"/>
<dbReference type="STRING" id="4932.YOL146W"/>
<dbReference type="PaxDb" id="4932-YOL146W"/>
<dbReference type="PeptideAtlas" id="Q12146"/>
<dbReference type="EnsemblFungi" id="YOL146W_mRNA">
    <property type="protein sequence ID" value="YOL146W"/>
    <property type="gene ID" value="YOL146W"/>
</dbReference>
<dbReference type="GeneID" id="854019"/>
<dbReference type="KEGG" id="sce:YOL146W"/>
<dbReference type="AGR" id="SGD:S000005506"/>
<dbReference type="SGD" id="S000005506">
    <property type="gene designation" value="PSF3"/>
</dbReference>
<dbReference type="VEuPathDB" id="FungiDB:YOL146W"/>
<dbReference type="eggNOG" id="KOG1106">
    <property type="taxonomic scope" value="Eukaryota"/>
</dbReference>
<dbReference type="GeneTree" id="ENSGT00390000001622"/>
<dbReference type="HOGENOM" id="CLU_081646_0_1_1"/>
<dbReference type="InParanoid" id="Q12146"/>
<dbReference type="OMA" id="IYKEGWR"/>
<dbReference type="OrthoDB" id="10251744at2759"/>
<dbReference type="BioCyc" id="YEAST:G3O-33536-MONOMER"/>
<dbReference type="Reactome" id="R-SCE-176974">
    <property type="pathway name" value="Unwinding of DNA"/>
</dbReference>
<dbReference type="BioGRID-ORCS" id="854019">
    <property type="hits" value="4 hits in 10 CRISPR screens"/>
</dbReference>
<dbReference type="PRO" id="PR:Q12146"/>
<dbReference type="Proteomes" id="UP000002311">
    <property type="component" value="Chromosome XV"/>
</dbReference>
<dbReference type="RNAct" id="Q12146">
    <property type="molecule type" value="protein"/>
</dbReference>
<dbReference type="GO" id="GO:0071162">
    <property type="term" value="C:CMG complex"/>
    <property type="evidence" value="ECO:0000314"/>
    <property type="project" value="SGD"/>
</dbReference>
<dbReference type="GO" id="GO:0031261">
    <property type="term" value="C:DNA replication preinitiation complex"/>
    <property type="evidence" value="ECO:0000353"/>
    <property type="project" value="SGD"/>
</dbReference>
<dbReference type="GO" id="GO:0000811">
    <property type="term" value="C:GINS complex"/>
    <property type="evidence" value="ECO:0000353"/>
    <property type="project" value="ComplexPortal"/>
</dbReference>
<dbReference type="GO" id="GO:0043596">
    <property type="term" value="C:nuclear replication fork"/>
    <property type="evidence" value="ECO:0000314"/>
    <property type="project" value="ComplexPortal"/>
</dbReference>
<dbReference type="GO" id="GO:0005634">
    <property type="term" value="C:nucleus"/>
    <property type="evidence" value="ECO:0000303"/>
    <property type="project" value="ComplexPortal"/>
</dbReference>
<dbReference type="GO" id="GO:0006261">
    <property type="term" value="P:DNA-templated DNA replication"/>
    <property type="evidence" value="ECO:0000316"/>
    <property type="project" value="SGD"/>
</dbReference>
<dbReference type="GO" id="GO:0000727">
    <property type="term" value="P:double-strand break repair via break-induced replication"/>
    <property type="evidence" value="ECO:0000315"/>
    <property type="project" value="SGD"/>
</dbReference>
<dbReference type="GO" id="GO:1902975">
    <property type="term" value="P:mitotic DNA replication initiation"/>
    <property type="evidence" value="ECO:0000318"/>
    <property type="project" value="GO_Central"/>
</dbReference>
<dbReference type="CDD" id="cd11713">
    <property type="entry name" value="GINS_A_psf3"/>
    <property type="match status" value="1"/>
</dbReference>
<dbReference type="CDD" id="cd21693">
    <property type="entry name" value="GINS_B_Psf3"/>
    <property type="match status" value="1"/>
</dbReference>
<dbReference type="FunFam" id="1.20.58.2050:FF:000004">
    <property type="entry name" value="GINS complex subunit"/>
    <property type="match status" value="1"/>
</dbReference>
<dbReference type="Gene3D" id="1.20.58.2050">
    <property type="match status" value="1"/>
</dbReference>
<dbReference type="InterPro" id="IPR021151">
    <property type="entry name" value="GINS_A"/>
</dbReference>
<dbReference type="InterPro" id="IPR036224">
    <property type="entry name" value="GINS_bundle-like_dom_sf"/>
</dbReference>
<dbReference type="InterPro" id="IPR010492">
    <property type="entry name" value="GINS_Psf3"/>
</dbReference>
<dbReference type="InterPro" id="IPR038437">
    <property type="entry name" value="GINS_Psf3_sf"/>
</dbReference>
<dbReference type="InterPro" id="IPR055221">
    <property type="entry name" value="PSF3_N"/>
</dbReference>
<dbReference type="PANTHER" id="PTHR22768">
    <property type="entry name" value="DNA REPLICATION COMPLEX GINS PROTEIN PSF3"/>
    <property type="match status" value="1"/>
</dbReference>
<dbReference type="PANTHER" id="PTHR22768:SF0">
    <property type="entry name" value="DNA REPLICATION COMPLEX GINS PROTEIN PSF3"/>
    <property type="match status" value="1"/>
</dbReference>
<dbReference type="Pfam" id="PF22466">
    <property type="entry name" value="PSF3_N"/>
    <property type="match status" value="1"/>
</dbReference>
<dbReference type="Pfam" id="PF05916">
    <property type="entry name" value="Sld5"/>
    <property type="match status" value="1"/>
</dbReference>
<dbReference type="SUPFAM" id="SSF158573">
    <property type="entry name" value="GINS helical bundle-like"/>
    <property type="match status" value="1"/>
</dbReference>
<dbReference type="SUPFAM" id="SSF160059">
    <property type="entry name" value="PriA/YqbF domain"/>
    <property type="match status" value="1"/>
</dbReference>
<accession>Q12146</accession>
<accession>D6W1S3</accession>
<feature type="chain" id="PRO_0000132325" description="DNA replication complex GINS protein PSF3">
    <location>
        <begin position="1"/>
        <end position="194"/>
    </location>
</feature>
<feature type="helix" evidence="8">
    <location>
        <begin position="6"/>
        <end position="12"/>
    </location>
</feature>
<feature type="strand" evidence="8">
    <location>
        <begin position="14"/>
        <end position="20"/>
    </location>
</feature>
<feature type="helix" evidence="8">
    <location>
        <begin position="27"/>
        <end position="31"/>
    </location>
</feature>
<feature type="strand" evidence="8">
    <location>
        <begin position="43"/>
        <end position="47"/>
    </location>
</feature>
<feature type="helix" evidence="8">
    <location>
        <begin position="48"/>
        <end position="54"/>
    </location>
</feature>
<feature type="strand" evidence="8">
    <location>
        <begin position="71"/>
        <end position="74"/>
    </location>
</feature>
<feature type="helix" evidence="8">
    <location>
        <begin position="78"/>
        <end position="80"/>
    </location>
</feature>
<feature type="helix" evidence="8">
    <location>
        <begin position="82"/>
        <end position="90"/>
    </location>
</feature>
<feature type="turn" evidence="8">
    <location>
        <begin position="92"/>
        <end position="94"/>
    </location>
</feature>
<feature type="helix" evidence="8">
    <location>
        <begin position="97"/>
        <end position="100"/>
    </location>
</feature>
<feature type="helix" evidence="8">
    <location>
        <begin position="104"/>
        <end position="114"/>
    </location>
</feature>
<feature type="helix" evidence="8">
    <location>
        <begin position="118"/>
        <end position="140"/>
    </location>
</feature>
<feature type="helix" evidence="8">
    <location>
        <begin position="160"/>
        <end position="165"/>
    </location>
</feature>
<feature type="helix" evidence="8">
    <location>
        <begin position="166"/>
        <end position="168"/>
    </location>
</feature>
<feature type="helix" evidence="8">
    <location>
        <begin position="171"/>
        <end position="192"/>
    </location>
</feature>
<gene>
    <name evidence="7" type="primary">PSF3</name>
    <name type="ordered locus">YOL146W</name>
</gene>
<comment type="function">
    <text evidence="1 2">Functions as part of the GINS complex which plays an essential role in the initiation of DNA replication by binding to DNA replication origins and facilitating the assembly of the DNA replication machinery.</text>
</comment>
<comment type="subunit">
    <text evidence="2">Component of the GINS complex which is a heterotetramer of SLD5, PSF1, PSF2 and PSF3.</text>
</comment>
<comment type="interaction">
    <interactant intactId="EBI-30392">
        <id>Q12146</id>
    </interactant>
    <interactant intactId="EBI-10549">
        <id>P29496</id>
        <label>MCM5</label>
    </interactant>
    <organismsDiffer>false</organismsDiffer>
    <experiments>2</experiments>
</comment>
<comment type="interaction">
    <interactant intactId="EBI-30392">
        <id>Q12146</id>
    </interactant>
    <interactant intactId="EBI-25936">
        <id>P40359</id>
        <label>PSF2</label>
    </interactant>
    <organismsDiffer>false</organismsDiffer>
    <experiments>5</experiments>
</comment>
<comment type="subcellular location">
    <subcellularLocation>
        <location evidence="2">Nucleus</location>
    </subcellularLocation>
</comment>
<comment type="miscellaneous">
    <text evidence="3">Present with 2205 molecules/cell in log phase SD medium.</text>
</comment>
<comment type="similarity">
    <text evidence="4">Belongs to the GINS3/PSF3 family.</text>
</comment>
<comment type="sequence caution" evidence="4">
    <conflict type="erroneous initiation">
        <sequence resource="EMBL-CDS" id="AAT93239"/>
    </conflict>
</comment>
<comment type="sequence caution" evidence="4">
    <conflict type="erroneous initiation">
        <sequence resource="EMBL-CDS" id="CAA88281"/>
    </conflict>
</comment>
<comment type="sequence caution" evidence="4">
    <conflict type="erroneous initiation">
        <sequence resource="EMBL-CDS" id="CAA99167"/>
    </conflict>
</comment>
<organism>
    <name type="scientific">Saccharomyces cerevisiae (strain ATCC 204508 / S288c)</name>
    <name type="common">Baker's yeast</name>
    <dbReference type="NCBI Taxonomy" id="559292"/>
    <lineage>
        <taxon>Eukaryota</taxon>
        <taxon>Fungi</taxon>
        <taxon>Dikarya</taxon>
        <taxon>Ascomycota</taxon>
        <taxon>Saccharomycotina</taxon>
        <taxon>Saccharomycetes</taxon>
        <taxon>Saccharomycetales</taxon>
        <taxon>Saccharomycetaceae</taxon>
        <taxon>Saccharomyces</taxon>
    </lineage>
</organism>
<reference evidence="5" key="1">
    <citation type="journal article" date="1995" name="Yeast">
        <title>DNA sequence analysis of a 13 kbp fragment of the left arm of yeast chromosome XV containing seven new open reading frames.</title>
        <authorList>
            <person name="Casamayor A."/>
            <person name="Aldea M."/>
            <person name="Casas C."/>
            <person name="Herrero E."/>
            <person name="Gamo F.-J."/>
            <person name="Lafuente M.J."/>
            <person name="Gancedo C."/>
            <person name="Arino J."/>
        </authorList>
    </citation>
    <scope>NUCLEOTIDE SEQUENCE [GENOMIC DNA]</scope>
    <source>
        <strain>ATCC 96604 / S288c / FY1679</strain>
    </source>
</reference>
<reference evidence="4 6" key="2">
    <citation type="journal article" date="1997" name="Nature">
        <title>The nucleotide sequence of Saccharomyces cerevisiae chromosome XV.</title>
        <authorList>
            <person name="Dujon B."/>
            <person name="Albermann K."/>
            <person name="Aldea M."/>
            <person name="Alexandraki D."/>
            <person name="Ansorge W."/>
            <person name="Arino J."/>
            <person name="Benes V."/>
            <person name="Bohn C."/>
            <person name="Bolotin-Fukuhara M."/>
            <person name="Bordonne R."/>
            <person name="Boyer J."/>
            <person name="Camasses A."/>
            <person name="Casamayor A."/>
            <person name="Casas C."/>
            <person name="Cheret G."/>
            <person name="Cziepluch C."/>
            <person name="Daignan-Fornier B."/>
            <person name="Dang V.-D."/>
            <person name="de Haan M."/>
            <person name="Delius H."/>
            <person name="Durand P."/>
            <person name="Fairhead C."/>
            <person name="Feldmann H."/>
            <person name="Gaillon L."/>
            <person name="Galisson F."/>
            <person name="Gamo F.-J."/>
            <person name="Gancedo C."/>
            <person name="Goffeau A."/>
            <person name="Goulding S.E."/>
            <person name="Grivell L.A."/>
            <person name="Habbig B."/>
            <person name="Hand N.J."/>
            <person name="Hani J."/>
            <person name="Hattenhorst U."/>
            <person name="Hebling U."/>
            <person name="Hernando Y."/>
            <person name="Herrero E."/>
            <person name="Heumann K."/>
            <person name="Hiesel R."/>
            <person name="Hilger F."/>
            <person name="Hofmann B."/>
            <person name="Hollenberg C.P."/>
            <person name="Hughes B."/>
            <person name="Jauniaux J.-C."/>
            <person name="Kalogeropoulos A."/>
            <person name="Katsoulou C."/>
            <person name="Kordes E."/>
            <person name="Lafuente M.J."/>
            <person name="Landt O."/>
            <person name="Louis E.J."/>
            <person name="Maarse A.C."/>
            <person name="Madania A."/>
            <person name="Mannhaupt G."/>
            <person name="Marck C."/>
            <person name="Martin R.P."/>
            <person name="Mewes H.-W."/>
            <person name="Michaux G."/>
            <person name="Paces V."/>
            <person name="Parle-McDermott A.G."/>
            <person name="Pearson B.M."/>
            <person name="Perrin A."/>
            <person name="Pettersson B."/>
            <person name="Poch O."/>
            <person name="Pohl T.M."/>
            <person name="Poirey R."/>
            <person name="Portetelle D."/>
            <person name="Pujol A."/>
            <person name="Purnelle B."/>
            <person name="Ramezani Rad M."/>
            <person name="Rechmann S."/>
            <person name="Schwager C."/>
            <person name="Schweizer M."/>
            <person name="Sor F."/>
            <person name="Sterky F."/>
            <person name="Tarassov I.A."/>
            <person name="Teodoru C."/>
            <person name="Tettelin H."/>
            <person name="Thierry A."/>
            <person name="Tobiasch E."/>
            <person name="Tzermia M."/>
            <person name="Uhlen M."/>
            <person name="Unseld M."/>
            <person name="Valens M."/>
            <person name="Vandenbol M."/>
            <person name="Vetter I."/>
            <person name="Vlcek C."/>
            <person name="Voet M."/>
            <person name="Volckaert G."/>
            <person name="Voss H."/>
            <person name="Wambutt R."/>
            <person name="Wedler H."/>
            <person name="Wiemann S."/>
            <person name="Winsor B."/>
            <person name="Wolfe K.H."/>
            <person name="Zollner A."/>
            <person name="Zumstein E."/>
            <person name="Kleine K."/>
        </authorList>
    </citation>
    <scope>NUCLEOTIDE SEQUENCE [LARGE SCALE GENOMIC DNA]</scope>
    <source>
        <strain>ATCC 204508 / S288c</strain>
    </source>
</reference>
<reference key="3">
    <citation type="journal article" date="2014" name="G3 (Bethesda)">
        <title>The reference genome sequence of Saccharomyces cerevisiae: Then and now.</title>
        <authorList>
            <person name="Engel S.R."/>
            <person name="Dietrich F.S."/>
            <person name="Fisk D.G."/>
            <person name="Binkley G."/>
            <person name="Balakrishnan R."/>
            <person name="Costanzo M.C."/>
            <person name="Dwight S.S."/>
            <person name="Hitz B.C."/>
            <person name="Karra K."/>
            <person name="Nash R.S."/>
            <person name="Weng S."/>
            <person name="Wong E.D."/>
            <person name="Lloyd P."/>
            <person name="Skrzypek M.S."/>
            <person name="Miyasato S.R."/>
            <person name="Simison M."/>
            <person name="Cherry J.M."/>
        </authorList>
    </citation>
    <scope>GENOME REANNOTATION</scope>
    <source>
        <strain>ATCC 204508 / S288c</strain>
    </source>
</reference>
<reference key="4">
    <citation type="journal article" date="2007" name="Genome Res.">
        <title>Approaching a complete repository of sequence-verified protein-encoding clones for Saccharomyces cerevisiae.</title>
        <authorList>
            <person name="Hu Y."/>
            <person name="Rolfs A."/>
            <person name="Bhullar B."/>
            <person name="Murthy T.V.S."/>
            <person name="Zhu C."/>
            <person name="Berger M.F."/>
            <person name="Camargo A.A."/>
            <person name="Kelley F."/>
            <person name="McCarron S."/>
            <person name="Jepson D."/>
            <person name="Richardson A."/>
            <person name="Raphael J."/>
            <person name="Moreira D."/>
            <person name="Taycher E."/>
            <person name="Zuo D."/>
            <person name="Mohr S."/>
            <person name="Kane M.F."/>
            <person name="Williamson J."/>
            <person name="Simpson A.J.G."/>
            <person name="Bulyk M.L."/>
            <person name="Harlow E."/>
            <person name="Marsischky G."/>
            <person name="Kolodner R.D."/>
            <person name="LaBaer J."/>
        </authorList>
    </citation>
    <scope>NUCLEOTIDE SEQUENCE [GENOMIC DNA]</scope>
    <source>
        <strain>ATCC 204508 / S288c</strain>
    </source>
</reference>
<reference key="5">
    <citation type="journal article" date="2003" name="Mol. Cell">
        <title>Assigning function to yeast proteins by integration of technologies.</title>
        <authorList>
            <person name="Hazbun T.R."/>
            <person name="Malmstroem L."/>
            <person name="Anderson S."/>
            <person name="Graczyk B.J."/>
            <person name="Fox B."/>
            <person name="Riffle M."/>
            <person name="Sundin B.A."/>
            <person name="Aranda J.D."/>
            <person name="McDonald W.H."/>
            <person name="Chiu C.-H."/>
            <person name="Snydsman B.E."/>
            <person name="Bradley P."/>
            <person name="Muller E.G.D."/>
            <person name="Fields S."/>
            <person name="Baker D."/>
            <person name="Yates J.R. III"/>
            <person name="Davis T.N."/>
        </authorList>
    </citation>
    <scope>IDENTIFICATION BY MASS SPECTROMETRY</scope>
</reference>
<reference evidence="4" key="6">
    <citation type="journal article" date="2003" name="Nature">
        <title>Sequencing and comparison of yeast species to identify genes and regulatory elements.</title>
        <authorList>
            <person name="Kellis M."/>
            <person name="Patterson N."/>
            <person name="Endrizzi M."/>
            <person name="Birren B.W."/>
            <person name="Lander E.S."/>
        </authorList>
    </citation>
    <scope>IDENTIFICATION OF PROBABLE INITIATION SITE</scope>
</reference>
<reference evidence="4" key="7">
    <citation type="journal article" date="2003" name="Genes Dev.">
        <title>GINS, a novel multiprotein complex required for chromosomal DNA replication in budding yeast.</title>
        <authorList>
            <person name="Takayama Y."/>
            <person name="Kamimura Y."/>
            <person name="Okawa M."/>
            <person name="Muramatsu S."/>
            <person name="Sugino A."/>
            <person name="Araki H."/>
        </authorList>
    </citation>
    <scope>FUNCTION</scope>
    <scope>IDENTIFICATION IN THE GINS COMPLEX</scope>
    <scope>SUBCELLULAR LOCATION</scope>
</reference>
<reference evidence="4" key="8">
    <citation type="journal article" date="2003" name="Nature">
        <title>Global analysis of protein expression in yeast.</title>
        <authorList>
            <person name="Ghaemmaghami S."/>
            <person name="Huh W.-K."/>
            <person name="Bower K."/>
            <person name="Howson R.W."/>
            <person name="Belle A."/>
            <person name="Dephoure N."/>
            <person name="O'Shea E.K."/>
            <person name="Weissman J.S."/>
        </authorList>
    </citation>
    <scope>LEVEL OF PROTEIN EXPRESSION [LARGE SCALE ANALYSIS]</scope>
</reference>
<keyword id="KW-0002">3D-structure</keyword>
<keyword id="KW-0235">DNA replication</keyword>
<keyword id="KW-0539">Nucleus</keyword>
<keyword id="KW-1185">Reference proteome</keyword>